<reference key="1">
    <citation type="submission" date="2006-08" db="EMBL/GenBank/DDBJ databases">
        <title>Complete sequence of Shewanella frigidimarina NCIMB 400.</title>
        <authorList>
            <consortium name="US DOE Joint Genome Institute"/>
            <person name="Copeland A."/>
            <person name="Lucas S."/>
            <person name="Lapidus A."/>
            <person name="Barry K."/>
            <person name="Detter J.C."/>
            <person name="Glavina del Rio T."/>
            <person name="Hammon N."/>
            <person name="Israni S."/>
            <person name="Dalin E."/>
            <person name="Tice H."/>
            <person name="Pitluck S."/>
            <person name="Fredrickson J.K."/>
            <person name="Kolker E."/>
            <person name="McCuel L.A."/>
            <person name="DiChristina T."/>
            <person name="Nealson K.H."/>
            <person name="Newman D."/>
            <person name="Tiedje J.M."/>
            <person name="Zhou J."/>
            <person name="Romine M.F."/>
            <person name="Culley D.E."/>
            <person name="Serres M."/>
            <person name="Chertkov O."/>
            <person name="Brettin T."/>
            <person name="Bruce D."/>
            <person name="Han C."/>
            <person name="Tapia R."/>
            <person name="Gilna P."/>
            <person name="Schmutz J."/>
            <person name="Larimer F."/>
            <person name="Land M."/>
            <person name="Hauser L."/>
            <person name="Kyrpides N."/>
            <person name="Mikhailova N."/>
            <person name="Richardson P."/>
        </authorList>
    </citation>
    <scope>NUCLEOTIDE SEQUENCE [LARGE SCALE GENOMIC DNA]</scope>
    <source>
        <strain>NCIMB 400</strain>
    </source>
</reference>
<keyword id="KW-1185">Reference proteome</keyword>
<keyword id="KW-0687">Ribonucleoprotein</keyword>
<keyword id="KW-0689">Ribosomal protein</keyword>
<keyword id="KW-0694">RNA-binding</keyword>
<keyword id="KW-0699">rRNA-binding</keyword>
<gene>
    <name evidence="1" type="primary">rpsT</name>
    <name type="ordered locus">Sfri_2893</name>
</gene>
<comment type="function">
    <text evidence="1">Binds directly to 16S ribosomal RNA.</text>
</comment>
<comment type="similarity">
    <text evidence="1">Belongs to the bacterial ribosomal protein bS20 family.</text>
</comment>
<evidence type="ECO:0000255" key="1">
    <source>
        <dbReference type="HAMAP-Rule" id="MF_00500"/>
    </source>
</evidence>
<evidence type="ECO:0000256" key="2">
    <source>
        <dbReference type="SAM" id="MobiDB-lite"/>
    </source>
</evidence>
<evidence type="ECO:0000305" key="3"/>
<sequence>MANSKSAKKRALQSEKRRQHNASRRSMLRTYVKRVIAAIKSGDHKAATEAFAIAQPIVDRMATKGLIHKNKAGRQKARLNAKIKAIAA</sequence>
<feature type="chain" id="PRO_1000014651" description="Small ribosomal subunit protein bS20">
    <location>
        <begin position="1"/>
        <end position="88"/>
    </location>
</feature>
<feature type="region of interest" description="Disordered" evidence="2">
    <location>
        <begin position="1"/>
        <end position="27"/>
    </location>
</feature>
<accession>Q07Z32</accession>
<name>RS20_SHEFN</name>
<proteinExistence type="inferred from homology"/>
<organism>
    <name type="scientific">Shewanella frigidimarina (strain NCIMB 400)</name>
    <dbReference type="NCBI Taxonomy" id="318167"/>
    <lineage>
        <taxon>Bacteria</taxon>
        <taxon>Pseudomonadati</taxon>
        <taxon>Pseudomonadota</taxon>
        <taxon>Gammaproteobacteria</taxon>
        <taxon>Alteromonadales</taxon>
        <taxon>Shewanellaceae</taxon>
        <taxon>Shewanella</taxon>
    </lineage>
</organism>
<protein>
    <recommendedName>
        <fullName evidence="1">Small ribosomal subunit protein bS20</fullName>
    </recommendedName>
    <alternativeName>
        <fullName evidence="3">30S ribosomal protein S20</fullName>
    </alternativeName>
</protein>
<dbReference type="EMBL" id="CP000447">
    <property type="protein sequence ID" value="ABI72732.1"/>
    <property type="molecule type" value="Genomic_DNA"/>
</dbReference>
<dbReference type="RefSeq" id="WP_011638341.1">
    <property type="nucleotide sequence ID" value="NC_008345.1"/>
</dbReference>
<dbReference type="SMR" id="Q07Z32"/>
<dbReference type="STRING" id="318167.Sfri_2893"/>
<dbReference type="KEGG" id="sfr:Sfri_2893"/>
<dbReference type="eggNOG" id="COG0268">
    <property type="taxonomic scope" value="Bacteria"/>
</dbReference>
<dbReference type="HOGENOM" id="CLU_160655_4_0_6"/>
<dbReference type="OrthoDB" id="9807974at2"/>
<dbReference type="Proteomes" id="UP000000684">
    <property type="component" value="Chromosome"/>
</dbReference>
<dbReference type="GO" id="GO:0005829">
    <property type="term" value="C:cytosol"/>
    <property type="evidence" value="ECO:0007669"/>
    <property type="project" value="TreeGrafter"/>
</dbReference>
<dbReference type="GO" id="GO:0015935">
    <property type="term" value="C:small ribosomal subunit"/>
    <property type="evidence" value="ECO:0007669"/>
    <property type="project" value="TreeGrafter"/>
</dbReference>
<dbReference type="GO" id="GO:0070181">
    <property type="term" value="F:small ribosomal subunit rRNA binding"/>
    <property type="evidence" value="ECO:0007669"/>
    <property type="project" value="TreeGrafter"/>
</dbReference>
<dbReference type="GO" id="GO:0003735">
    <property type="term" value="F:structural constituent of ribosome"/>
    <property type="evidence" value="ECO:0007669"/>
    <property type="project" value="InterPro"/>
</dbReference>
<dbReference type="GO" id="GO:0006412">
    <property type="term" value="P:translation"/>
    <property type="evidence" value="ECO:0007669"/>
    <property type="project" value="UniProtKB-UniRule"/>
</dbReference>
<dbReference type="FunFam" id="1.20.58.110:FF:000001">
    <property type="entry name" value="30S ribosomal protein S20"/>
    <property type="match status" value="1"/>
</dbReference>
<dbReference type="Gene3D" id="1.20.58.110">
    <property type="entry name" value="Ribosomal protein S20"/>
    <property type="match status" value="1"/>
</dbReference>
<dbReference type="HAMAP" id="MF_00500">
    <property type="entry name" value="Ribosomal_bS20"/>
    <property type="match status" value="1"/>
</dbReference>
<dbReference type="InterPro" id="IPR002583">
    <property type="entry name" value="Ribosomal_bS20"/>
</dbReference>
<dbReference type="InterPro" id="IPR036510">
    <property type="entry name" value="Ribosomal_bS20_sf"/>
</dbReference>
<dbReference type="NCBIfam" id="TIGR00029">
    <property type="entry name" value="S20"/>
    <property type="match status" value="1"/>
</dbReference>
<dbReference type="PANTHER" id="PTHR33398">
    <property type="entry name" value="30S RIBOSOMAL PROTEIN S20"/>
    <property type="match status" value="1"/>
</dbReference>
<dbReference type="PANTHER" id="PTHR33398:SF1">
    <property type="entry name" value="SMALL RIBOSOMAL SUBUNIT PROTEIN BS20C"/>
    <property type="match status" value="1"/>
</dbReference>
<dbReference type="Pfam" id="PF01649">
    <property type="entry name" value="Ribosomal_S20p"/>
    <property type="match status" value="1"/>
</dbReference>
<dbReference type="SUPFAM" id="SSF46992">
    <property type="entry name" value="Ribosomal protein S20"/>
    <property type="match status" value="1"/>
</dbReference>